<organism>
    <name type="scientific">Pan troglodytes</name>
    <name type="common">Chimpanzee</name>
    <dbReference type="NCBI Taxonomy" id="9598"/>
    <lineage>
        <taxon>Eukaryota</taxon>
        <taxon>Metazoa</taxon>
        <taxon>Chordata</taxon>
        <taxon>Craniata</taxon>
        <taxon>Vertebrata</taxon>
        <taxon>Euteleostomi</taxon>
        <taxon>Mammalia</taxon>
        <taxon>Eutheria</taxon>
        <taxon>Euarchontoglires</taxon>
        <taxon>Primates</taxon>
        <taxon>Haplorrhini</taxon>
        <taxon>Catarrhini</taxon>
        <taxon>Hominidae</taxon>
        <taxon>Pan</taxon>
    </lineage>
</organism>
<sequence length="428" mass="48991">MAENDVDNELLDYEDDEVETAAGGDGAEAPAKKDVKGSYVSIHSSGFRDFLLKPELLRAIVDCGFEHPSEVQHECIPQAILGMDVLCQAKSGMGKTAVFVLATLQQLEPVTGQVSVLVMCHTRELAFQISKEYERFSKYMPNVKVAVFFGGLSIKKDEEVLKKNCPHIVVGTPGRILALARNKSLNLKHIKHFILDECDKMLEQLDMRRDVQEIFRMTPHEKQVMMFSATLSKEIRPVCRKFMQDPMEIFVDDETKLTLHGLQQYYVKLKDNEKNRKLFDLLDVLEFNQVVIFVKSVQRCIALAQLLVEQNFPAIAIHRGMPQEERLSRYQQFKDFQRRILVATNLFGRGMDIERVNIAFNYDMPEDSDTYLHRVARAGRFGTKGLAITFVSDENDAKILNDVQDRFEVNISELPDEIDISSYIEQTR</sequence>
<feature type="initiator methionine" description="Removed" evidence="2">
    <location>
        <position position="1"/>
    </location>
</feature>
<feature type="chain" id="PRO_0000055074" description="Spliceosome RNA helicase DDX39B">
    <location>
        <begin position="2"/>
        <end position="428"/>
    </location>
</feature>
<feature type="domain" description="Helicase ATP-binding" evidence="3">
    <location>
        <begin position="76"/>
        <end position="249"/>
    </location>
</feature>
<feature type="domain" description="Helicase C-terminal" evidence="4">
    <location>
        <begin position="261"/>
        <end position="422"/>
    </location>
</feature>
<feature type="region of interest" description="Disordered" evidence="5">
    <location>
        <begin position="1"/>
        <end position="31"/>
    </location>
</feature>
<feature type="short sequence motif" description="Q motif">
    <location>
        <begin position="45"/>
        <end position="73"/>
    </location>
</feature>
<feature type="short sequence motif" description="DECD box">
    <location>
        <begin position="196"/>
        <end position="199"/>
    </location>
</feature>
<feature type="compositionally biased region" description="Acidic residues" evidence="5">
    <location>
        <begin position="1"/>
        <end position="19"/>
    </location>
</feature>
<feature type="binding site" evidence="3">
    <location>
        <begin position="89"/>
        <end position="96"/>
    </location>
    <ligand>
        <name>ATP</name>
        <dbReference type="ChEBI" id="CHEBI:30616"/>
    </ligand>
</feature>
<feature type="modified residue" description="N-acetylalanine" evidence="2">
    <location>
        <position position="2"/>
    </location>
</feature>
<feature type="modified residue" description="N6-acetyllysine; alternate" evidence="2">
    <location>
        <position position="36"/>
    </location>
</feature>
<feature type="modified residue" description="Phosphoserine" evidence="2">
    <location>
        <position position="38"/>
    </location>
</feature>
<feature type="modified residue" description="Phosphoserine" evidence="2">
    <location>
        <position position="41"/>
    </location>
</feature>
<feature type="modified residue" description="Phosphothreonine" evidence="2">
    <location>
        <position position="172"/>
    </location>
</feature>
<feature type="cross-link" description="Glycyl lysine isopeptide (Lys-Gly) (interchain with G-Cter in SUMO2); alternate" evidence="2">
    <location>
        <position position="36"/>
    </location>
</feature>
<evidence type="ECO:0000250" key="1"/>
<evidence type="ECO:0000250" key="2">
    <source>
        <dbReference type="UniProtKB" id="Q13838"/>
    </source>
</evidence>
<evidence type="ECO:0000255" key="3">
    <source>
        <dbReference type="PROSITE-ProRule" id="PRU00541"/>
    </source>
</evidence>
<evidence type="ECO:0000255" key="4">
    <source>
        <dbReference type="PROSITE-ProRule" id="PRU00542"/>
    </source>
</evidence>
<evidence type="ECO:0000256" key="5">
    <source>
        <dbReference type="SAM" id="MobiDB-lite"/>
    </source>
</evidence>
<evidence type="ECO:0000305" key="6"/>
<gene>
    <name type="primary">DDX39B</name>
    <name type="synonym">BAT1</name>
    <name type="synonym">UAP56</name>
</gene>
<proteinExistence type="inferred from homology"/>
<protein>
    <recommendedName>
        <fullName>Spliceosome RNA helicase DDX39B</fullName>
        <ecNumber>3.6.4.13</ecNumber>
    </recommendedName>
    <alternativeName>
        <fullName>56 kDa U2AF65-associated protein</fullName>
    </alternativeName>
    <alternativeName>
        <fullName>DEAD box protein UAP56</fullName>
    </alternativeName>
</protein>
<accession>P60024</accession>
<accession>Q1XHY8</accession>
<keyword id="KW-0007">Acetylation</keyword>
<keyword id="KW-0067">ATP-binding</keyword>
<keyword id="KW-0963">Cytoplasm</keyword>
<keyword id="KW-0347">Helicase</keyword>
<keyword id="KW-0378">Hydrolase</keyword>
<keyword id="KW-1017">Isopeptide bond</keyword>
<keyword id="KW-0507">mRNA processing</keyword>
<keyword id="KW-0508">mRNA splicing</keyword>
<keyword id="KW-0509">mRNA transport</keyword>
<keyword id="KW-0547">Nucleotide-binding</keyword>
<keyword id="KW-0539">Nucleus</keyword>
<keyword id="KW-0597">Phosphoprotein</keyword>
<keyword id="KW-1185">Reference proteome</keyword>
<keyword id="KW-0694">RNA-binding</keyword>
<keyword id="KW-0747">Spliceosome</keyword>
<keyword id="KW-0813">Transport</keyword>
<keyword id="KW-0832">Ubl conjugation</keyword>
<comment type="function">
    <text evidence="2">Involved in nuclear export of spliced and unspliced mRNA. Component of the TREX complex which is thought to couple mRNA transcription, processing and nuclear export, and specifically associates with spliced mRNA and not with unspliced pre-mRNA. The TREX complex is recruited to spliced mRNAs by a transcription-independent mechanism, binds to mRNA upstream of the exon-junction complex (EJC) and is recruited in a splicing- and cap-dependent manner to a region near the 5' end of the mRNA where it functions in mRNA export to the cytoplasm via the TAP/NXF1 pathway. The THOC1-THOC2-THOC3 core complex alone is sufficient to promote ATPase activity of DDX39B; in the complex THOC2 is the only component that directly interacts with DDX39B. Associates with SARNP/CIP29, which facilitates RNA binding of DDX39B and likely plays a role in mRNA export. May undergo several rounds of ATP hydrolysis during assembly of TREX to drive subsequent loading of components such as ALYREF/THOC4 and CHTOP onto mRNA. Also associates with pre-mRNA independent of ALYREF/THOC4. Involved in the nuclear export of intronless mRNA; the ATP-bound form is proposed to recruit export adapter ALYREF/THOC4 to intronless mRNA; its ATPase activity is cooperatively stimulated by RNA and ALYREF/THOC4 and ATP hydrolysis is thought to trigger the dissociation from RNA to allow the association of ALYREF/THOC4 and the NXF1-NXT1 heterodimer. Involved in transcription elongation and genome stability.</text>
</comment>
<comment type="function">
    <text evidence="2">Splice factor that is required for the first ATP-dependent step in spliceosome assembly and for the interaction of U2 snRNP with the branchpoint. Has both RNA-stimulated ATP binding/hydrolysis activity and ATP-dependent RNA unwinding activity. Even with the stimulation of RNA, the ATPase activity is weak. Can only hydrolyze ATP but not other NTPs. The RNA stimulation of ATPase activity does not have a strong preference for the sequence and length of the RNA. However, ssRNA stimulates the ATPase activity much more strongly than dsRNA. Can unwind 5' or 3' overhangs or blunt end RNA duplexes in vitro. The ATPase and helicase activities are not influenced by U2AF2; the effect of ALYREF/THOC4 is reported conflictingly.</text>
</comment>
<comment type="catalytic activity">
    <reaction evidence="2">
        <text>ATP + H2O = ADP + phosphate + H(+)</text>
        <dbReference type="Rhea" id="RHEA:13065"/>
        <dbReference type="ChEBI" id="CHEBI:15377"/>
        <dbReference type="ChEBI" id="CHEBI:15378"/>
        <dbReference type="ChEBI" id="CHEBI:30616"/>
        <dbReference type="ChEBI" id="CHEBI:43474"/>
        <dbReference type="ChEBI" id="CHEBI:456216"/>
        <dbReference type="EC" id="3.6.4.13"/>
    </reaction>
</comment>
<comment type="subunit">
    <text evidence="2">Homodimer, and heterodimer with DDX39A. DDX39B interacts with the THO subcomplex to form the THO-DDX39B complex which multimerizes into a 28-subunit tetrameric assembly. Component of the transcription/export (TREX) complex at least composed of ALYREF/THOC4, DDX39B, SARNP/CIP29, CHTOP and the THO subcomplex; in the complex interacts with THOC2. THOC1-THOC2-THOC3-DDX39B subcomplex is sufficient for the interaction with export factor NXF1-NXT1. TREX seems to have a dynamic structure involving ATP-dependent remodeling. Within the TREX complex bridges ALYREF/THOC4 and the THO subcomplex, and, in a ATP-dependent manner, ALYREF/THOC4 and SARNP/CIP29. Component of the spliceosome. Interacts directly with U2AF2. Interacts with RBM8A, RNPS1 and SRRM1, FYTTD1/UIF, THOC1, MX1 and POLDIP3. Interacts with LUZP4. Interacts with SARNP/CIP29 (via the C-terminal domain); the interaction is direct and facilitates RNA binding of DDX39B.</text>
</comment>
<comment type="subcellular location">
    <subcellularLocation>
        <location evidence="1">Nucleus</location>
    </subcellularLocation>
    <subcellularLocation>
        <location evidence="1">Nucleus speckle</location>
    </subcellularLocation>
    <subcellularLocation>
        <location evidence="1">Cytoplasm</location>
    </subcellularLocation>
    <text evidence="1">Can translocate to the cytoplasm in the presence of MX1.</text>
</comment>
<comment type="domain">
    <text evidence="1">The helicase C-terminal domain mediates interaction with ALYREF/THOC4.</text>
</comment>
<comment type="similarity">
    <text evidence="6">Belongs to the DEAD box helicase family. DECD subfamily.</text>
</comment>
<name>DX39B_PANTR</name>
<reference key="1">
    <citation type="journal article" date="2002" name="Immunol. Rev.">
        <title>Comparative genomic analysis of the MHC: the evolution of class I duplication blocks, diversity and complexity from shark to man.</title>
        <authorList>
            <person name="Kulski J.K."/>
            <person name="Shiina T."/>
            <person name="Anzai T."/>
            <person name="Kohara S."/>
            <person name="Inoko H."/>
        </authorList>
    </citation>
    <scope>NUCLEOTIDE SEQUENCE [GENOMIC DNA]</scope>
</reference>
<reference key="2">
    <citation type="journal article" date="2003" name="Proc. Natl. Acad. Sci. U.S.A.">
        <title>Comparative sequencing of human and chimpanzee MHC class I regions unveils insertions/deletions as the major path to genomic divergence.</title>
        <authorList>
            <person name="Anzai T."/>
            <person name="Shiina T."/>
            <person name="Kimura N."/>
            <person name="Yanagiya K."/>
            <person name="Kohara S."/>
            <person name="Shigenari A."/>
            <person name="Yamagata T."/>
            <person name="Kulski J.K."/>
            <person name="Naruse T.K."/>
            <person name="Fujimori Y."/>
            <person name="Fukuzumi Y."/>
            <person name="Yamazaki M."/>
            <person name="Tashiro H."/>
            <person name="Iwamoto C."/>
            <person name="Umehara Y."/>
            <person name="Imanishi T."/>
            <person name="Meyer A."/>
            <person name="Ikeo K."/>
            <person name="Gojobori T."/>
            <person name="Bahram S."/>
            <person name="Inoko H."/>
        </authorList>
    </citation>
    <scope>NUCLEOTIDE SEQUENCE [LARGE SCALE GENOMIC DNA]</scope>
</reference>
<reference key="3">
    <citation type="journal article" date="2006" name="Genetics">
        <title>Rapid evolution of major histocompatibility complex class I genes in primates generates new disease alleles in humans via hitchhiking diversity.</title>
        <authorList>
            <person name="Shiina T."/>
            <person name="Ota M."/>
            <person name="Shimizu S."/>
            <person name="Katsuyama Y."/>
            <person name="Hashimoto N."/>
            <person name="Takasu M."/>
            <person name="Anzai T."/>
            <person name="Kulski J.K."/>
            <person name="Kikkawa E."/>
            <person name="Naruse T."/>
            <person name="Kimura N."/>
            <person name="Yanagiya K."/>
            <person name="Watanabe A."/>
            <person name="Hosomichi K."/>
            <person name="Kohara S."/>
            <person name="Iwamoto C."/>
            <person name="Umehara Y."/>
            <person name="Meyer A."/>
            <person name="Wanner V."/>
            <person name="Sano K."/>
            <person name="Macquin C."/>
            <person name="Ikeo K."/>
            <person name="Tokunaga K."/>
            <person name="Gojobori T."/>
            <person name="Inoko H."/>
            <person name="Bahram S."/>
        </authorList>
    </citation>
    <scope>NUCLEOTIDE SEQUENCE [LARGE SCALE GENOMIC DNA]</scope>
</reference>
<dbReference type="EC" id="3.6.4.13"/>
<dbReference type="EMBL" id="AB054536">
    <property type="protein sequence ID" value="BAB83886.1"/>
    <property type="molecule type" value="Genomic_DNA"/>
</dbReference>
<dbReference type="EMBL" id="BA000041">
    <property type="protein sequence ID" value="BAC78161.1"/>
    <property type="molecule type" value="Genomic_DNA"/>
</dbReference>
<dbReference type="EMBL" id="AB210169">
    <property type="protein sequence ID" value="BAE92779.1"/>
    <property type="molecule type" value="Genomic_DNA"/>
</dbReference>
<dbReference type="EMBL" id="AB210170">
    <property type="protein sequence ID" value="BAE92782.1"/>
    <property type="molecule type" value="Genomic_DNA"/>
</dbReference>
<dbReference type="RefSeq" id="NP_001107635.1">
    <property type="nucleotide sequence ID" value="NM_001114163.1"/>
</dbReference>
<dbReference type="RefSeq" id="XP_009449127.2">
    <property type="nucleotide sequence ID" value="XM_009450852.4"/>
</dbReference>
<dbReference type="RefSeq" id="XP_009449128.2">
    <property type="nucleotide sequence ID" value="XM_009450853.2"/>
</dbReference>
<dbReference type="RefSeq" id="XP_009449129.2">
    <property type="nucleotide sequence ID" value="XM_009450854.4"/>
</dbReference>
<dbReference type="RefSeq" id="XP_063668033.1">
    <property type="nucleotide sequence ID" value="XM_063811963.1"/>
</dbReference>
<dbReference type="SMR" id="P60024"/>
<dbReference type="FunCoup" id="P60024">
    <property type="interactions" value="3953"/>
</dbReference>
<dbReference type="STRING" id="9598.ENSPTRP00000054521"/>
<dbReference type="PaxDb" id="9598-ENSPTRP00000054521"/>
<dbReference type="Ensembl" id="ENSPTRT00000061973.4">
    <property type="protein sequence ID" value="ENSPTRP00000054521.4"/>
    <property type="gene ID" value="ENSPTRG00000032509.4"/>
</dbReference>
<dbReference type="GeneID" id="463180"/>
<dbReference type="KEGG" id="ptr:463180"/>
<dbReference type="CTD" id="7919"/>
<dbReference type="VGNC" id="VGNC:52006">
    <property type="gene designation" value="DDX39B"/>
</dbReference>
<dbReference type="eggNOG" id="KOG0329">
    <property type="taxonomic scope" value="Eukaryota"/>
</dbReference>
<dbReference type="GeneTree" id="ENSGT00940000160110"/>
<dbReference type="InParanoid" id="P60024"/>
<dbReference type="OMA" id="YAHVEPK"/>
<dbReference type="Proteomes" id="UP000002277">
    <property type="component" value="Chromosome 6"/>
</dbReference>
<dbReference type="Bgee" id="ENSPTRG00000032509">
    <property type="expression patterns" value="Expressed in cerebellar cortex and 21 other cell types or tissues"/>
</dbReference>
<dbReference type="GO" id="GO:0005737">
    <property type="term" value="C:cytoplasm"/>
    <property type="evidence" value="ECO:0007669"/>
    <property type="project" value="UniProtKB-SubCell"/>
</dbReference>
<dbReference type="GO" id="GO:0016607">
    <property type="term" value="C:nuclear speck"/>
    <property type="evidence" value="ECO:0007669"/>
    <property type="project" value="UniProtKB-SubCell"/>
</dbReference>
<dbReference type="GO" id="GO:0005681">
    <property type="term" value="C:spliceosomal complex"/>
    <property type="evidence" value="ECO:0007669"/>
    <property type="project" value="UniProtKB-KW"/>
</dbReference>
<dbReference type="GO" id="GO:0000346">
    <property type="term" value="C:transcription export complex"/>
    <property type="evidence" value="ECO:0007669"/>
    <property type="project" value="Ensembl"/>
</dbReference>
<dbReference type="GO" id="GO:0005687">
    <property type="term" value="C:U4 snRNP"/>
    <property type="evidence" value="ECO:0007669"/>
    <property type="project" value="Ensembl"/>
</dbReference>
<dbReference type="GO" id="GO:0005688">
    <property type="term" value="C:U6 snRNP"/>
    <property type="evidence" value="ECO:0007669"/>
    <property type="project" value="Ensembl"/>
</dbReference>
<dbReference type="GO" id="GO:0005524">
    <property type="term" value="F:ATP binding"/>
    <property type="evidence" value="ECO:0007669"/>
    <property type="project" value="UniProtKB-KW"/>
</dbReference>
<dbReference type="GO" id="GO:0016887">
    <property type="term" value="F:ATP hydrolysis activity"/>
    <property type="evidence" value="ECO:0007669"/>
    <property type="project" value="RHEA"/>
</dbReference>
<dbReference type="GO" id="GO:0043008">
    <property type="term" value="F:ATP-dependent protein binding"/>
    <property type="evidence" value="ECO:0007669"/>
    <property type="project" value="Ensembl"/>
</dbReference>
<dbReference type="GO" id="GO:0042802">
    <property type="term" value="F:identical protein binding"/>
    <property type="evidence" value="ECO:0007669"/>
    <property type="project" value="Ensembl"/>
</dbReference>
<dbReference type="GO" id="GO:0003729">
    <property type="term" value="F:mRNA binding"/>
    <property type="evidence" value="ECO:0000318"/>
    <property type="project" value="GO_Central"/>
</dbReference>
<dbReference type="GO" id="GO:0003724">
    <property type="term" value="F:RNA helicase activity"/>
    <property type="evidence" value="ECO:0000318"/>
    <property type="project" value="GO_Central"/>
</dbReference>
<dbReference type="GO" id="GO:0030621">
    <property type="term" value="F:U4 snRNA binding"/>
    <property type="evidence" value="ECO:0007669"/>
    <property type="project" value="Ensembl"/>
</dbReference>
<dbReference type="GO" id="GO:0017070">
    <property type="term" value="F:U6 snRNA binding"/>
    <property type="evidence" value="ECO:0007669"/>
    <property type="project" value="Ensembl"/>
</dbReference>
<dbReference type="GO" id="GO:0006406">
    <property type="term" value="P:mRNA export from nucleus"/>
    <property type="evidence" value="ECO:0000318"/>
    <property type="project" value="GO_Central"/>
</dbReference>
<dbReference type="GO" id="GO:0000398">
    <property type="term" value="P:mRNA splicing, via spliceosome"/>
    <property type="evidence" value="ECO:0000318"/>
    <property type="project" value="GO_Central"/>
</dbReference>
<dbReference type="GO" id="GO:0000245">
    <property type="term" value="P:spliceosomal complex assembly"/>
    <property type="evidence" value="ECO:0007669"/>
    <property type="project" value="Ensembl"/>
</dbReference>
<dbReference type="CDD" id="cd17950">
    <property type="entry name" value="DEADc_DDX39"/>
    <property type="match status" value="1"/>
</dbReference>
<dbReference type="CDD" id="cd18787">
    <property type="entry name" value="SF2_C_DEAD"/>
    <property type="match status" value="1"/>
</dbReference>
<dbReference type="FunFam" id="3.40.50.300:FF:000111">
    <property type="entry name" value="DEAD-box ATP-dependent RNA helicase"/>
    <property type="match status" value="1"/>
</dbReference>
<dbReference type="FunFam" id="3.40.50.300:FF:000168">
    <property type="entry name" value="DEAD-box ATP-dependent RNA helicase 56-like"/>
    <property type="match status" value="1"/>
</dbReference>
<dbReference type="Gene3D" id="3.40.50.300">
    <property type="entry name" value="P-loop containing nucleotide triphosphate hydrolases"/>
    <property type="match status" value="2"/>
</dbReference>
<dbReference type="InterPro" id="IPR011545">
    <property type="entry name" value="DEAD/DEAH_box_helicase_dom"/>
</dbReference>
<dbReference type="InterPro" id="IPR014001">
    <property type="entry name" value="Helicase_ATP-bd"/>
</dbReference>
<dbReference type="InterPro" id="IPR001650">
    <property type="entry name" value="Helicase_C-like"/>
</dbReference>
<dbReference type="InterPro" id="IPR027417">
    <property type="entry name" value="P-loop_NTPase"/>
</dbReference>
<dbReference type="InterPro" id="IPR014014">
    <property type="entry name" value="RNA_helicase_DEAD_Q_motif"/>
</dbReference>
<dbReference type="PANTHER" id="PTHR47958">
    <property type="entry name" value="ATP-DEPENDENT RNA HELICASE DBP3"/>
    <property type="match status" value="1"/>
</dbReference>
<dbReference type="Pfam" id="PF00270">
    <property type="entry name" value="DEAD"/>
    <property type="match status" value="1"/>
</dbReference>
<dbReference type="Pfam" id="PF00271">
    <property type="entry name" value="Helicase_C"/>
    <property type="match status" value="1"/>
</dbReference>
<dbReference type="SMART" id="SM00487">
    <property type="entry name" value="DEXDc"/>
    <property type="match status" value="1"/>
</dbReference>
<dbReference type="SMART" id="SM00490">
    <property type="entry name" value="HELICc"/>
    <property type="match status" value="1"/>
</dbReference>
<dbReference type="SUPFAM" id="SSF52540">
    <property type="entry name" value="P-loop containing nucleoside triphosphate hydrolases"/>
    <property type="match status" value="1"/>
</dbReference>
<dbReference type="PROSITE" id="PS51192">
    <property type="entry name" value="HELICASE_ATP_BIND_1"/>
    <property type="match status" value="1"/>
</dbReference>
<dbReference type="PROSITE" id="PS51194">
    <property type="entry name" value="HELICASE_CTER"/>
    <property type="match status" value="1"/>
</dbReference>
<dbReference type="PROSITE" id="PS51195">
    <property type="entry name" value="Q_MOTIF"/>
    <property type="match status" value="1"/>
</dbReference>